<proteinExistence type="predicted"/>
<feature type="chain" id="PRO_0000107033" description="Uncharacterized protein MTH_886">
    <location>
        <begin position="1"/>
        <end position="92"/>
    </location>
</feature>
<dbReference type="EMBL" id="AE000666">
    <property type="protein sequence ID" value="AAB85384.1"/>
    <property type="molecule type" value="Genomic_DNA"/>
</dbReference>
<dbReference type="PIR" id="D69218">
    <property type="entry name" value="D69218"/>
</dbReference>
<dbReference type="RefSeq" id="WP_010876519.1">
    <property type="nucleotide sequence ID" value="NC_000916.1"/>
</dbReference>
<dbReference type="SMR" id="O26972"/>
<dbReference type="FunCoup" id="O26972">
    <property type="interactions" value="2"/>
</dbReference>
<dbReference type="STRING" id="187420.MTH_886"/>
<dbReference type="PaxDb" id="187420-MTH_886"/>
<dbReference type="EnsemblBacteria" id="AAB85384">
    <property type="protein sequence ID" value="AAB85384"/>
    <property type="gene ID" value="MTH_886"/>
</dbReference>
<dbReference type="GeneID" id="32153986"/>
<dbReference type="KEGG" id="mth:MTH_886"/>
<dbReference type="HOGENOM" id="CLU_165884_2_0_2"/>
<dbReference type="InParanoid" id="O26972"/>
<dbReference type="Proteomes" id="UP000005223">
    <property type="component" value="Chromosome"/>
</dbReference>
<dbReference type="GO" id="GO:0001522">
    <property type="term" value="P:pseudouridine synthesis"/>
    <property type="evidence" value="ECO:0007669"/>
    <property type="project" value="InterPro"/>
</dbReference>
<dbReference type="GO" id="GO:0042254">
    <property type="term" value="P:ribosome biogenesis"/>
    <property type="evidence" value="ECO:0007669"/>
    <property type="project" value="InterPro"/>
</dbReference>
<dbReference type="Gene3D" id="2.40.10.230">
    <property type="entry name" value="Probable tRNA pseudouridine synthase domain"/>
    <property type="match status" value="1"/>
</dbReference>
<dbReference type="InterPro" id="IPR038664">
    <property type="entry name" value="Gar1/Naf1_Cbf5-bd_sf"/>
</dbReference>
<dbReference type="InterPro" id="IPR007504">
    <property type="entry name" value="H/ACA_rnp_Gar1/Naf1"/>
</dbReference>
<dbReference type="InterPro" id="IPR009000">
    <property type="entry name" value="Transl_B-barrel_sf"/>
</dbReference>
<dbReference type="NCBIfam" id="NF009631">
    <property type="entry name" value="PRK13149.2-2"/>
    <property type="match status" value="1"/>
</dbReference>
<dbReference type="Pfam" id="PF04410">
    <property type="entry name" value="Gar1"/>
    <property type="match status" value="1"/>
</dbReference>
<dbReference type="SUPFAM" id="SSF50447">
    <property type="entry name" value="Translation proteins"/>
    <property type="match status" value="1"/>
</dbReference>
<protein>
    <recommendedName>
        <fullName>Uncharacterized protein MTH_886</fullName>
    </recommendedName>
</protein>
<accession>O26972</accession>
<comment type="similarity">
    <text evidence="1">To M.jannaschii MJ0782.1.</text>
</comment>
<sequence>MKALGNISHVSNKGRIIARSDRTQQLGAPVFTSDGKRIGKVHDIFGPTRNPYISIKPSRAINPEKFENRVGETLYVGIKNVKKWGRRKRRRK</sequence>
<name>Y886_METTH</name>
<evidence type="ECO:0000305" key="1"/>
<reference key="1">
    <citation type="journal article" date="1997" name="J. Bacteriol.">
        <title>Complete genome sequence of Methanobacterium thermoautotrophicum deltaH: functional analysis and comparative genomics.</title>
        <authorList>
            <person name="Smith D.R."/>
            <person name="Doucette-Stamm L.A."/>
            <person name="Deloughery C."/>
            <person name="Lee H.-M."/>
            <person name="Dubois J."/>
            <person name="Aldredge T."/>
            <person name="Bashirzadeh R."/>
            <person name="Blakely D."/>
            <person name="Cook R."/>
            <person name="Gilbert K."/>
            <person name="Harrison D."/>
            <person name="Hoang L."/>
            <person name="Keagle P."/>
            <person name="Lumm W."/>
            <person name="Pothier B."/>
            <person name="Qiu D."/>
            <person name="Spadafora R."/>
            <person name="Vicare R."/>
            <person name="Wang Y."/>
            <person name="Wierzbowski J."/>
            <person name="Gibson R."/>
            <person name="Jiwani N."/>
            <person name="Caruso A."/>
            <person name="Bush D."/>
            <person name="Safer H."/>
            <person name="Patwell D."/>
            <person name="Prabhakar S."/>
            <person name="McDougall S."/>
            <person name="Shimer G."/>
            <person name="Goyal A."/>
            <person name="Pietrovski S."/>
            <person name="Church G.M."/>
            <person name="Daniels C.J."/>
            <person name="Mao J.-I."/>
            <person name="Rice P."/>
            <person name="Noelling J."/>
            <person name="Reeve J.N."/>
        </authorList>
    </citation>
    <scope>NUCLEOTIDE SEQUENCE [LARGE SCALE GENOMIC DNA]</scope>
    <source>
        <strain>ATCC 29096 / DSM 1053 / JCM 10044 / NBRC 100330 / Delta H</strain>
    </source>
</reference>
<keyword id="KW-1185">Reference proteome</keyword>
<organism>
    <name type="scientific">Methanothermobacter thermautotrophicus (strain ATCC 29096 / DSM 1053 / JCM 10044 / NBRC 100330 / Delta H)</name>
    <name type="common">Methanobacterium thermoautotrophicum</name>
    <dbReference type="NCBI Taxonomy" id="187420"/>
    <lineage>
        <taxon>Archaea</taxon>
        <taxon>Methanobacteriati</taxon>
        <taxon>Methanobacteriota</taxon>
        <taxon>Methanomada group</taxon>
        <taxon>Methanobacteria</taxon>
        <taxon>Methanobacteriales</taxon>
        <taxon>Methanobacteriaceae</taxon>
        <taxon>Methanothermobacter</taxon>
    </lineage>
</organism>
<gene>
    <name type="ordered locus">MTH_886</name>
</gene>